<name>CH60_BDEBA</name>
<accession>Q6MRI1</accession>
<keyword id="KW-0067">ATP-binding</keyword>
<keyword id="KW-0143">Chaperone</keyword>
<keyword id="KW-0963">Cytoplasm</keyword>
<keyword id="KW-0413">Isomerase</keyword>
<keyword id="KW-0547">Nucleotide-binding</keyword>
<keyword id="KW-1185">Reference proteome</keyword>
<organism>
    <name type="scientific">Bdellovibrio bacteriovorus (strain ATCC 15356 / DSM 50701 / NCIMB 9529 / HD100)</name>
    <dbReference type="NCBI Taxonomy" id="264462"/>
    <lineage>
        <taxon>Bacteria</taxon>
        <taxon>Pseudomonadati</taxon>
        <taxon>Bdellovibrionota</taxon>
        <taxon>Bdellovibrionia</taxon>
        <taxon>Bdellovibrionales</taxon>
        <taxon>Pseudobdellovibrionaceae</taxon>
        <taxon>Bdellovibrio</taxon>
    </lineage>
</organism>
<sequence length="546" mass="58128">MSKVITFSEDARTHILKGVNTLANAVKVTLGPKGRNVVIDKSFGSPLITKDGVTVAKEIELENKFENMGAQMVKEVASKTNDEAGDGTTTATVLAQAIYREGAKLVSAGHNPMSIKRGIDKAVGIIIEELKSMSKPVKGSNEVAQVGAISANNDKEIGQMLADAMDKVGREGVITIEESKTAKTEVTVVEGMQFDRGYLSPYFVTNAERMEAVLENAYVLVYDKKISSMKDMIGILEGVAKQGRQLLIIAEDVEGEALATLVVNKLRGTLHIAAVKAPGFGDRRKAMLEDIAILTGAKVISEDVGLKLEAATVADLGVAKRIVVDKDNTTIIDGAGKKNDINGRVGQIKAQIEETSSDYDKEKLKERLAKLAGGVAVIHVGAPSEVEMKEKKHRVEDALNATRAAVEEGIVAGGGTALLRASTKIDKSKFSEEEQFGATIIKRACEEPIRQIAANAGLDGAIVLDRILQNKSTTWGFNAYSDEYTDLIKDGVIDPVKVVRCALTNAASVSSLMLTTETMIAEAPKKESAAPAMPGHDGMGGMGGMM</sequence>
<reference key="1">
    <citation type="journal article" date="2004" name="Science">
        <title>A predator unmasked: life cycle of Bdellovibrio bacteriovorus from a genomic perspective.</title>
        <authorList>
            <person name="Rendulic S."/>
            <person name="Jagtap P."/>
            <person name="Rosinus A."/>
            <person name="Eppinger M."/>
            <person name="Baar C."/>
            <person name="Lanz C."/>
            <person name="Keller H."/>
            <person name="Lambert C."/>
            <person name="Evans K.J."/>
            <person name="Goesmann A."/>
            <person name="Meyer F."/>
            <person name="Sockett R.E."/>
            <person name="Schuster S.C."/>
        </authorList>
    </citation>
    <scope>NUCLEOTIDE SEQUENCE [LARGE SCALE GENOMIC DNA]</scope>
    <source>
        <strain>ATCC 15356 / DSM 50701 / NCIMB 9529 / HD100</strain>
    </source>
</reference>
<feature type="chain" id="PRO_0000063285" description="Chaperonin GroEL">
    <location>
        <begin position="1"/>
        <end position="546"/>
    </location>
</feature>
<feature type="region of interest" description="Disordered" evidence="2">
    <location>
        <begin position="525"/>
        <end position="546"/>
    </location>
</feature>
<feature type="compositionally biased region" description="Gly residues" evidence="2">
    <location>
        <begin position="537"/>
        <end position="546"/>
    </location>
</feature>
<feature type="binding site" evidence="1">
    <location>
        <begin position="29"/>
        <end position="32"/>
    </location>
    <ligand>
        <name>ATP</name>
        <dbReference type="ChEBI" id="CHEBI:30616"/>
    </ligand>
</feature>
<feature type="binding site" evidence="1">
    <location>
        <position position="50"/>
    </location>
    <ligand>
        <name>ATP</name>
        <dbReference type="ChEBI" id="CHEBI:30616"/>
    </ligand>
</feature>
<feature type="binding site" evidence="1">
    <location>
        <begin position="86"/>
        <end position="90"/>
    </location>
    <ligand>
        <name>ATP</name>
        <dbReference type="ChEBI" id="CHEBI:30616"/>
    </ligand>
</feature>
<feature type="binding site" evidence="1">
    <location>
        <position position="414"/>
    </location>
    <ligand>
        <name>ATP</name>
        <dbReference type="ChEBI" id="CHEBI:30616"/>
    </ligand>
</feature>
<feature type="binding site" evidence="1">
    <location>
        <position position="494"/>
    </location>
    <ligand>
        <name>ATP</name>
        <dbReference type="ChEBI" id="CHEBI:30616"/>
    </ligand>
</feature>
<evidence type="ECO:0000255" key="1">
    <source>
        <dbReference type="HAMAP-Rule" id="MF_00600"/>
    </source>
</evidence>
<evidence type="ECO:0000256" key="2">
    <source>
        <dbReference type="SAM" id="MobiDB-lite"/>
    </source>
</evidence>
<protein>
    <recommendedName>
        <fullName evidence="1">Chaperonin GroEL</fullName>
        <ecNumber evidence="1">5.6.1.7</ecNumber>
    </recommendedName>
    <alternativeName>
        <fullName evidence="1">60 kDa chaperonin</fullName>
    </alternativeName>
    <alternativeName>
        <fullName evidence="1">Chaperonin-60</fullName>
        <shortName evidence="1">Cpn60</shortName>
    </alternativeName>
</protein>
<comment type="function">
    <text evidence="1">Together with its co-chaperonin GroES, plays an essential role in assisting protein folding. The GroEL-GroES system forms a nano-cage that allows encapsulation of the non-native substrate proteins and provides a physical environment optimized to promote and accelerate protein folding.</text>
</comment>
<comment type="catalytic activity">
    <reaction evidence="1">
        <text>ATP + H2O + a folded polypeptide = ADP + phosphate + an unfolded polypeptide.</text>
        <dbReference type="EC" id="5.6.1.7"/>
    </reaction>
</comment>
<comment type="subunit">
    <text evidence="1">Forms a cylinder of 14 subunits composed of two heptameric rings stacked back-to-back. Interacts with the co-chaperonin GroES.</text>
</comment>
<comment type="subcellular location">
    <subcellularLocation>
        <location evidence="1">Cytoplasm</location>
    </subcellularLocation>
</comment>
<comment type="similarity">
    <text evidence="1">Belongs to the chaperonin (HSP60) family.</text>
</comment>
<dbReference type="EC" id="5.6.1.7" evidence="1"/>
<dbReference type="EMBL" id="BX842646">
    <property type="protein sequence ID" value="CAE77777.1"/>
    <property type="molecule type" value="Genomic_DNA"/>
</dbReference>
<dbReference type="RefSeq" id="WP_011162718.1">
    <property type="nucleotide sequence ID" value="NC_005363.1"/>
</dbReference>
<dbReference type="SMR" id="Q6MRI1"/>
<dbReference type="STRING" id="264462.Bd0099"/>
<dbReference type="GeneID" id="93011252"/>
<dbReference type="KEGG" id="bba:Bd0099"/>
<dbReference type="eggNOG" id="COG0459">
    <property type="taxonomic scope" value="Bacteria"/>
</dbReference>
<dbReference type="HOGENOM" id="CLU_016503_3_0_7"/>
<dbReference type="Proteomes" id="UP000008080">
    <property type="component" value="Chromosome"/>
</dbReference>
<dbReference type="GO" id="GO:0005737">
    <property type="term" value="C:cytoplasm"/>
    <property type="evidence" value="ECO:0007669"/>
    <property type="project" value="UniProtKB-SubCell"/>
</dbReference>
<dbReference type="GO" id="GO:0005524">
    <property type="term" value="F:ATP binding"/>
    <property type="evidence" value="ECO:0007669"/>
    <property type="project" value="UniProtKB-UniRule"/>
</dbReference>
<dbReference type="GO" id="GO:0140662">
    <property type="term" value="F:ATP-dependent protein folding chaperone"/>
    <property type="evidence" value="ECO:0007669"/>
    <property type="project" value="InterPro"/>
</dbReference>
<dbReference type="GO" id="GO:0016853">
    <property type="term" value="F:isomerase activity"/>
    <property type="evidence" value="ECO:0007669"/>
    <property type="project" value="UniProtKB-KW"/>
</dbReference>
<dbReference type="GO" id="GO:0051082">
    <property type="term" value="F:unfolded protein binding"/>
    <property type="evidence" value="ECO:0007669"/>
    <property type="project" value="UniProtKB-UniRule"/>
</dbReference>
<dbReference type="GO" id="GO:0042026">
    <property type="term" value="P:protein refolding"/>
    <property type="evidence" value="ECO:0007669"/>
    <property type="project" value="UniProtKB-UniRule"/>
</dbReference>
<dbReference type="CDD" id="cd03344">
    <property type="entry name" value="GroEL"/>
    <property type="match status" value="1"/>
</dbReference>
<dbReference type="FunFam" id="1.10.560.10:FF:000001">
    <property type="entry name" value="60 kDa chaperonin"/>
    <property type="match status" value="1"/>
</dbReference>
<dbReference type="FunFam" id="3.50.7.10:FF:000001">
    <property type="entry name" value="60 kDa chaperonin"/>
    <property type="match status" value="1"/>
</dbReference>
<dbReference type="Gene3D" id="3.50.7.10">
    <property type="entry name" value="GroEL"/>
    <property type="match status" value="1"/>
</dbReference>
<dbReference type="Gene3D" id="1.10.560.10">
    <property type="entry name" value="GroEL-like equatorial domain"/>
    <property type="match status" value="1"/>
</dbReference>
<dbReference type="Gene3D" id="3.30.260.10">
    <property type="entry name" value="TCP-1-like chaperonin intermediate domain"/>
    <property type="match status" value="1"/>
</dbReference>
<dbReference type="HAMAP" id="MF_00600">
    <property type="entry name" value="CH60"/>
    <property type="match status" value="1"/>
</dbReference>
<dbReference type="InterPro" id="IPR018370">
    <property type="entry name" value="Chaperonin_Cpn60_CS"/>
</dbReference>
<dbReference type="InterPro" id="IPR001844">
    <property type="entry name" value="Cpn60/GroEL"/>
</dbReference>
<dbReference type="InterPro" id="IPR002423">
    <property type="entry name" value="Cpn60/GroEL/TCP-1"/>
</dbReference>
<dbReference type="InterPro" id="IPR027409">
    <property type="entry name" value="GroEL-like_apical_dom_sf"/>
</dbReference>
<dbReference type="InterPro" id="IPR027413">
    <property type="entry name" value="GROEL-like_equatorial_sf"/>
</dbReference>
<dbReference type="InterPro" id="IPR027410">
    <property type="entry name" value="TCP-1-like_intermed_sf"/>
</dbReference>
<dbReference type="NCBIfam" id="TIGR02348">
    <property type="entry name" value="GroEL"/>
    <property type="match status" value="1"/>
</dbReference>
<dbReference type="NCBIfam" id="NF000592">
    <property type="entry name" value="PRK00013.1"/>
    <property type="match status" value="1"/>
</dbReference>
<dbReference type="NCBIfam" id="NF009487">
    <property type="entry name" value="PRK12849.1"/>
    <property type="match status" value="1"/>
</dbReference>
<dbReference type="NCBIfam" id="NF009488">
    <property type="entry name" value="PRK12850.1"/>
    <property type="match status" value="1"/>
</dbReference>
<dbReference type="NCBIfam" id="NF009489">
    <property type="entry name" value="PRK12851.1"/>
    <property type="match status" value="1"/>
</dbReference>
<dbReference type="PANTHER" id="PTHR45633">
    <property type="entry name" value="60 KDA HEAT SHOCK PROTEIN, MITOCHONDRIAL"/>
    <property type="match status" value="1"/>
</dbReference>
<dbReference type="Pfam" id="PF00118">
    <property type="entry name" value="Cpn60_TCP1"/>
    <property type="match status" value="1"/>
</dbReference>
<dbReference type="PRINTS" id="PR00298">
    <property type="entry name" value="CHAPERONIN60"/>
</dbReference>
<dbReference type="SUPFAM" id="SSF52029">
    <property type="entry name" value="GroEL apical domain-like"/>
    <property type="match status" value="1"/>
</dbReference>
<dbReference type="SUPFAM" id="SSF48592">
    <property type="entry name" value="GroEL equatorial domain-like"/>
    <property type="match status" value="1"/>
</dbReference>
<dbReference type="SUPFAM" id="SSF54849">
    <property type="entry name" value="GroEL-intermediate domain like"/>
    <property type="match status" value="1"/>
</dbReference>
<dbReference type="PROSITE" id="PS00296">
    <property type="entry name" value="CHAPERONINS_CPN60"/>
    <property type="match status" value="1"/>
</dbReference>
<gene>
    <name evidence="1" type="primary">groEL</name>
    <name evidence="1" type="synonym">groL</name>
    <name type="ordered locus">Bd0099</name>
</gene>
<proteinExistence type="inferred from homology"/>